<name>LEUC_BRUA1</name>
<sequence>MSAPRTLYDKIWDDHVVDQQEDGTCLLYIDRHLVHEVTSPQAFEGLRMAGRPVRHPEKTLAVVDHNVPTSPDRINGIQNEESRIQVEALARNAADFGVEYYSERDKRQGIVHIVGPEQGFTLPGMTIVCGDSHTSTHGAFGALAHGIGTSEVEHVLATQTLIQKKAKNMLVRVDGKLPAGVTAKDIVLAIIGEIGTAGGTGYVIEYAGEAIRSLSMEGRMTICNMSIEGGARAGLIAPDETTFEYIKGRPRAPQGETLEQAINYWKTLHSDEGAHFDKIVTLDAGSLPPIVSWGSSPEDVVSVTGVVPNPDDIADETKRASKWRALDYMGLKPGTKITDIAVDRVFIGSCTNGRIEDLRAAAKVVEGKKVAPTVNAMIVPGSGLVKEQAEAEGLHKIFIEAGFDWREPGCSMCLAMNDDRLKPGERCASTSNRNFEGRQGFKGRTHLVSPAMAAAAAIAGHFVDIRAWK</sequence>
<organism>
    <name type="scientific">Brucella abortus (strain S19)</name>
    <dbReference type="NCBI Taxonomy" id="430066"/>
    <lineage>
        <taxon>Bacteria</taxon>
        <taxon>Pseudomonadati</taxon>
        <taxon>Pseudomonadota</taxon>
        <taxon>Alphaproteobacteria</taxon>
        <taxon>Hyphomicrobiales</taxon>
        <taxon>Brucellaceae</taxon>
        <taxon>Brucella/Ochrobactrum group</taxon>
        <taxon>Brucella</taxon>
    </lineage>
</organism>
<dbReference type="EC" id="4.2.1.33" evidence="1"/>
<dbReference type="EMBL" id="CP000887">
    <property type="protein sequence ID" value="ACD73269.1"/>
    <property type="molecule type" value="Genomic_DNA"/>
</dbReference>
<dbReference type="RefSeq" id="WP_002964974.1">
    <property type="nucleotide sequence ID" value="NC_010742.1"/>
</dbReference>
<dbReference type="SMR" id="B2S860"/>
<dbReference type="GeneID" id="93017762"/>
<dbReference type="KEGG" id="bmc:BAbS19_I17870"/>
<dbReference type="HOGENOM" id="CLU_006714_3_4_5"/>
<dbReference type="UniPathway" id="UPA00048">
    <property type="reaction ID" value="UER00071"/>
</dbReference>
<dbReference type="Proteomes" id="UP000002565">
    <property type="component" value="Chromosome 1"/>
</dbReference>
<dbReference type="GO" id="GO:0003861">
    <property type="term" value="F:3-isopropylmalate dehydratase activity"/>
    <property type="evidence" value="ECO:0007669"/>
    <property type="project" value="UniProtKB-UniRule"/>
</dbReference>
<dbReference type="GO" id="GO:0051539">
    <property type="term" value="F:4 iron, 4 sulfur cluster binding"/>
    <property type="evidence" value="ECO:0007669"/>
    <property type="project" value="UniProtKB-KW"/>
</dbReference>
<dbReference type="GO" id="GO:0046872">
    <property type="term" value="F:metal ion binding"/>
    <property type="evidence" value="ECO:0007669"/>
    <property type="project" value="UniProtKB-KW"/>
</dbReference>
<dbReference type="GO" id="GO:0009098">
    <property type="term" value="P:L-leucine biosynthetic process"/>
    <property type="evidence" value="ECO:0007669"/>
    <property type="project" value="UniProtKB-UniRule"/>
</dbReference>
<dbReference type="CDD" id="cd01583">
    <property type="entry name" value="IPMI"/>
    <property type="match status" value="1"/>
</dbReference>
<dbReference type="FunFam" id="3.30.499.10:FF:000006">
    <property type="entry name" value="3-isopropylmalate dehydratase large subunit"/>
    <property type="match status" value="1"/>
</dbReference>
<dbReference type="FunFam" id="3.30.499.10:FF:000007">
    <property type="entry name" value="3-isopropylmalate dehydratase large subunit"/>
    <property type="match status" value="1"/>
</dbReference>
<dbReference type="Gene3D" id="3.30.499.10">
    <property type="entry name" value="Aconitase, domain 3"/>
    <property type="match status" value="2"/>
</dbReference>
<dbReference type="HAMAP" id="MF_01026">
    <property type="entry name" value="LeuC_type1"/>
    <property type="match status" value="1"/>
</dbReference>
<dbReference type="InterPro" id="IPR004430">
    <property type="entry name" value="3-IsopropMal_deHydase_lsu"/>
</dbReference>
<dbReference type="InterPro" id="IPR015931">
    <property type="entry name" value="Acnase/IPM_dHydase_lsu_aba_1/3"/>
</dbReference>
<dbReference type="InterPro" id="IPR001030">
    <property type="entry name" value="Acoase/IPM_deHydtase_lsu_aba"/>
</dbReference>
<dbReference type="InterPro" id="IPR018136">
    <property type="entry name" value="Aconitase_4Fe-4S_BS"/>
</dbReference>
<dbReference type="InterPro" id="IPR036008">
    <property type="entry name" value="Aconitase_4Fe-4S_dom"/>
</dbReference>
<dbReference type="InterPro" id="IPR050067">
    <property type="entry name" value="IPM_dehydratase_rel_enz"/>
</dbReference>
<dbReference type="InterPro" id="IPR033941">
    <property type="entry name" value="IPMI_cat"/>
</dbReference>
<dbReference type="NCBIfam" id="TIGR00170">
    <property type="entry name" value="leuC"/>
    <property type="match status" value="1"/>
</dbReference>
<dbReference type="NCBIfam" id="NF004016">
    <property type="entry name" value="PRK05478.1"/>
    <property type="match status" value="1"/>
</dbReference>
<dbReference type="NCBIfam" id="NF009116">
    <property type="entry name" value="PRK12466.1"/>
    <property type="match status" value="1"/>
</dbReference>
<dbReference type="PANTHER" id="PTHR43822:SF9">
    <property type="entry name" value="3-ISOPROPYLMALATE DEHYDRATASE"/>
    <property type="match status" value="1"/>
</dbReference>
<dbReference type="PANTHER" id="PTHR43822">
    <property type="entry name" value="HOMOACONITASE, MITOCHONDRIAL-RELATED"/>
    <property type="match status" value="1"/>
</dbReference>
<dbReference type="Pfam" id="PF00330">
    <property type="entry name" value="Aconitase"/>
    <property type="match status" value="1"/>
</dbReference>
<dbReference type="PRINTS" id="PR00415">
    <property type="entry name" value="ACONITASE"/>
</dbReference>
<dbReference type="SUPFAM" id="SSF53732">
    <property type="entry name" value="Aconitase iron-sulfur domain"/>
    <property type="match status" value="1"/>
</dbReference>
<dbReference type="PROSITE" id="PS00450">
    <property type="entry name" value="ACONITASE_1"/>
    <property type="match status" value="1"/>
</dbReference>
<dbReference type="PROSITE" id="PS01244">
    <property type="entry name" value="ACONITASE_2"/>
    <property type="match status" value="1"/>
</dbReference>
<evidence type="ECO:0000255" key="1">
    <source>
        <dbReference type="HAMAP-Rule" id="MF_01026"/>
    </source>
</evidence>
<accession>B2S860</accession>
<gene>
    <name evidence="1" type="primary">leuC</name>
    <name type="ordered locus">BAbS19_I17870</name>
</gene>
<feature type="chain" id="PRO_1000135672" description="3-isopropylmalate dehydratase large subunit">
    <location>
        <begin position="1"/>
        <end position="469"/>
    </location>
</feature>
<feature type="binding site" evidence="1">
    <location>
        <position position="350"/>
    </location>
    <ligand>
        <name>[4Fe-4S] cluster</name>
        <dbReference type="ChEBI" id="CHEBI:49883"/>
    </ligand>
</feature>
<feature type="binding site" evidence="1">
    <location>
        <position position="410"/>
    </location>
    <ligand>
        <name>[4Fe-4S] cluster</name>
        <dbReference type="ChEBI" id="CHEBI:49883"/>
    </ligand>
</feature>
<feature type="binding site" evidence="1">
    <location>
        <position position="413"/>
    </location>
    <ligand>
        <name>[4Fe-4S] cluster</name>
        <dbReference type="ChEBI" id="CHEBI:49883"/>
    </ligand>
</feature>
<proteinExistence type="inferred from homology"/>
<reference key="1">
    <citation type="journal article" date="2008" name="PLoS ONE">
        <title>Genome sequence of Brucella abortus vaccine strain S19 compared to virulent strains yields candidate virulence genes.</title>
        <authorList>
            <person name="Crasta O.R."/>
            <person name="Folkerts O."/>
            <person name="Fei Z."/>
            <person name="Mane S.P."/>
            <person name="Evans C."/>
            <person name="Martino-Catt S."/>
            <person name="Bricker B."/>
            <person name="Yu G."/>
            <person name="Du L."/>
            <person name="Sobral B.W."/>
        </authorList>
    </citation>
    <scope>NUCLEOTIDE SEQUENCE [LARGE SCALE GENOMIC DNA]</scope>
    <source>
        <strain>S19</strain>
    </source>
</reference>
<comment type="function">
    <text evidence="1">Catalyzes the isomerization between 2-isopropylmalate and 3-isopropylmalate, via the formation of 2-isopropylmaleate.</text>
</comment>
<comment type="catalytic activity">
    <reaction evidence="1">
        <text>(2R,3S)-3-isopropylmalate = (2S)-2-isopropylmalate</text>
        <dbReference type="Rhea" id="RHEA:32287"/>
        <dbReference type="ChEBI" id="CHEBI:1178"/>
        <dbReference type="ChEBI" id="CHEBI:35121"/>
        <dbReference type="EC" id="4.2.1.33"/>
    </reaction>
</comment>
<comment type="cofactor">
    <cofactor evidence="1">
        <name>[4Fe-4S] cluster</name>
        <dbReference type="ChEBI" id="CHEBI:49883"/>
    </cofactor>
    <text evidence="1">Binds 1 [4Fe-4S] cluster per subunit.</text>
</comment>
<comment type="pathway">
    <text evidence="1">Amino-acid biosynthesis; L-leucine biosynthesis; L-leucine from 3-methyl-2-oxobutanoate: step 2/4.</text>
</comment>
<comment type="subunit">
    <text evidence="1">Heterodimer of LeuC and LeuD.</text>
</comment>
<comment type="similarity">
    <text evidence="1">Belongs to the aconitase/IPM isomerase family. LeuC type 1 subfamily.</text>
</comment>
<keyword id="KW-0004">4Fe-4S</keyword>
<keyword id="KW-0028">Amino-acid biosynthesis</keyword>
<keyword id="KW-0100">Branched-chain amino acid biosynthesis</keyword>
<keyword id="KW-0408">Iron</keyword>
<keyword id="KW-0411">Iron-sulfur</keyword>
<keyword id="KW-0432">Leucine biosynthesis</keyword>
<keyword id="KW-0456">Lyase</keyword>
<keyword id="KW-0479">Metal-binding</keyword>
<protein>
    <recommendedName>
        <fullName evidence="1">3-isopropylmalate dehydratase large subunit</fullName>
        <ecNumber evidence="1">4.2.1.33</ecNumber>
    </recommendedName>
    <alternativeName>
        <fullName evidence="1">Alpha-IPM isomerase</fullName>
        <shortName evidence="1">IPMI</shortName>
    </alternativeName>
    <alternativeName>
        <fullName evidence="1">Isopropylmalate isomerase</fullName>
    </alternativeName>
</protein>